<keyword id="KW-0007">Acetylation</keyword>
<keyword id="KW-0256">Endoplasmic reticulum</keyword>
<keyword id="KW-0472">Membrane</keyword>
<keyword id="KW-1185">Reference proteome</keyword>
<keyword id="KW-0812">Transmembrane</keyword>
<keyword id="KW-1133">Transmembrane helix</keyword>
<gene>
    <name type="primary">SPC1</name>
    <name type="ordered locus">YJR010C-A</name>
    <name type="ORF">YJR010BW</name>
</gene>
<proteinExistence type="evidence at protein level"/>
<sequence length="94" mass="10819">MSEILQDVQRKLVFPIDFPSQRKTEKFQQLSLMIGALVACILGFAQQSLKVLLTAYGISCVITLICVLPAYPWYNKQKLRWAQPKIEINVDQYD</sequence>
<comment type="function">
    <text evidence="5">Component of the signal peptidase complex (SPC) which catalyzes the cleavage of N-terminal signal sequences from nascent proteins as they are translocated into the lumen of the endoplasmic reticulum (PubMed:8663399). Dispensable for SPC enzymatic activity (PubMed:8663399).</text>
</comment>
<comment type="subunit">
    <text evidence="1 3 6">Component of the signal peptidase complex (SPC) composed of a catalytic subunit SEC11 and three accessory subunits SPC1, SPC2 and SPC3 (PubMed:9148931). The complex induces a local thinning of the ER membrane which is used to measure the length of the signal peptide (SP) h-region of protein substrates (By similarity). This ensures the selectivity of the complex towards h-regions shorter than 18-20 amino acids (By similarity). SPC associates with the translocon complex (PubMed:10921929). Interacts with SBH1 and SEB2/SBH2 (PubMed:10921929).</text>
</comment>
<comment type="interaction">
    <interactant intactId="EBI-17823">
        <id>P46965</id>
    </interactant>
    <interactant intactId="EBI-16513">
        <id>P15367</id>
        <label>SEC11</label>
    </interactant>
    <organismsDiffer>false</organismsDiffer>
    <experiments>4</experiments>
</comment>
<comment type="interaction">
    <interactant intactId="EBI-17823">
        <id>P46965</id>
    </interactant>
    <interactant intactId="EBI-27827">
        <id>Q04969</id>
        <label>SPC2</label>
    </interactant>
    <organismsDiffer>false</organismsDiffer>
    <experiments>3</experiments>
</comment>
<comment type="subcellular location">
    <subcellularLocation>
        <location evidence="5">Endoplasmic reticulum membrane</location>
        <topology evidence="2">Multi-pass membrane protein</topology>
    </subcellularLocation>
</comment>
<comment type="miscellaneous">
    <text evidence="4">Present with 5550 molecules/cell in log phase SD medium.</text>
</comment>
<comment type="similarity">
    <text evidence="7">Belongs to the SPCS1 family.</text>
</comment>
<protein>
    <recommendedName>
        <fullName>Signal peptidase complex subunit 1</fullName>
    </recommendedName>
    <alternativeName>
        <fullName>Microsomal signal peptidase subunit 1</fullName>
    </alternativeName>
</protein>
<evidence type="ECO:0000250" key="1">
    <source>
        <dbReference type="UniProtKB" id="P67812"/>
    </source>
</evidence>
<evidence type="ECO:0000255" key="2"/>
<evidence type="ECO:0000269" key="3">
    <source>
    </source>
</evidence>
<evidence type="ECO:0000269" key="4">
    <source>
    </source>
</evidence>
<evidence type="ECO:0000269" key="5">
    <source>
    </source>
</evidence>
<evidence type="ECO:0000269" key="6">
    <source>
    </source>
</evidence>
<evidence type="ECO:0000305" key="7"/>
<evidence type="ECO:0007744" key="8">
    <source>
    </source>
</evidence>
<reference key="1">
    <citation type="journal article" date="1996" name="J. Biol. Chem.">
        <title>The homologue of mammalian SPC12 is important for efficient signal peptidase activity in Saccharomyces cerevisiae.</title>
        <authorList>
            <person name="Fang H."/>
            <person name="Panzner S."/>
            <person name="Mullins C."/>
            <person name="Hartmann E."/>
            <person name="Green N."/>
        </authorList>
    </citation>
    <scope>NUCLEOTIDE SEQUENCE [GENOMIC DNA]</scope>
    <scope>FUNCTION</scope>
    <scope>SUBCELLULAR LOCATION</scope>
    <source>
        <strain>AB320 / ATCC 37323</strain>
    </source>
</reference>
<reference key="2">
    <citation type="journal article" date="1996" name="EMBO J.">
        <title>Complete nucleotide sequence of Saccharomyces cerevisiae chromosome X.</title>
        <authorList>
            <person name="Galibert F."/>
            <person name="Alexandraki D."/>
            <person name="Baur A."/>
            <person name="Boles E."/>
            <person name="Chalwatzis N."/>
            <person name="Chuat J.-C."/>
            <person name="Coster F."/>
            <person name="Cziepluch C."/>
            <person name="de Haan M."/>
            <person name="Domdey H."/>
            <person name="Durand P."/>
            <person name="Entian K.-D."/>
            <person name="Gatius M."/>
            <person name="Goffeau A."/>
            <person name="Grivell L.A."/>
            <person name="Hennemann A."/>
            <person name="Herbert C.J."/>
            <person name="Heumann K."/>
            <person name="Hilger F."/>
            <person name="Hollenberg C.P."/>
            <person name="Huang M.-E."/>
            <person name="Jacq C."/>
            <person name="Jauniaux J.-C."/>
            <person name="Katsoulou C."/>
            <person name="Kirchrath L."/>
            <person name="Kleine K."/>
            <person name="Kordes E."/>
            <person name="Koetter P."/>
            <person name="Liebl S."/>
            <person name="Louis E.J."/>
            <person name="Manus V."/>
            <person name="Mewes H.-W."/>
            <person name="Miosga T."/>
            <person name="Obermaier B."/>
            <person name="Perea J."/>
            <person name="Pohl T.M."/>
            <person name="Portetelle D."/>
            <person name="Pujol A."/>
            <person name="Purnelle B."/>
            <person name="Ramezani Rad M."/>
            <person name="Rasmussen S.W."/>
            <person name="Rose M."/>
            <person name="Rossau R."/>
            <person name="Schaaff-Gerstenschlaeger I."/>
            <person name="Smits P.H.M."/>
            <person name="Scarcez T."/>
            <person name="Soriano N."/>
            <person name="To Van D."/>
            <person name="Tzermia M."/>
            <person name="Van Broekhoven A."/>
            <person name="Vandenbol M."/>
            <person name="Wedler H."/>
            <person name="von Wettstein D."/>
            <person name="Wambutt R."/>
            <person name="Zagulski M."/>
            <person name="Zollner A."/>
            <person name="Karpfinger-Hartl L."/>
        </authorList>
    </citation>
    <scope>NUCLEOTIDE SEQUENCE [LARGE SCALE GENOMIC DNA]</scope>
    <source>
        <strain>ATCC 204508 / S288c</strain>
    </source>
</reference>
<reference key="3">
    <citation type="journal article" date="2014" name="G3 (Bethesda)">
        <title>The reference genome sequence of Saccharomyces cerevisiae: Then and now.</title>
        <authorList>
            <person name="Engel S.R."/>
            <person name="Dietrich F.S."/>
            <person name="Fisk D.G."/>
            <person name="Binkley G."/>
            <person name="Balakrishnan R."/>
            <person name="Costanzo M.C."/>
            <person name="Dwight S.S."/>
            <person name="Hitz B.C."/>
            <person name="Karra K."/>
            <person name="Nash R.S."/>
            <person name="Weng S."/>
            <person name="Wong E.D."/>
            <person name="Lloyd P."/>
            <person name="Skrzypek M.S."/>
            <person name="Miyasato S.R."/>
            <person name="Simison M."/>
            <person name="Cherry J.M."/>
        </authorList>
    </citation>
    <scope>GENOME REANNOTATION</scope>
    <source>
        <strain>ATCC 204508 / S288c</strain>
    </source>
</reference>
<reference key="4">
    <citation type="journal article" date="2007" name="Genome Res.">
        <title>Approaching a complete repository of sequence-verified protein-encoding clones for Saccharomyces cerevisiae.</title>
        <authorList>
            <person name="Hu Y."/>
            <person name="Rolfs A."/>
            <person name="Bhullar B."/>
            <person name="Murthy T.V.S."/>
            <person name="Zhu C."/>
            <person name="Berger M.F."/>
            <person name="Camargo A.A."/>
            <person name="Kelley F."/>
            <person name="McCarron S."/>
            <person name="Jepson D."/>
            <person name="Richardson A."/>
            <person name="Raphael J."/>
            <person name="Moreira D."/>
            <person name="Taycher E."/>
            <person name="Zuo D."/>
            <person name="Mohr S."/>
            <person name="Kane M.F."/>
            <person name="Williamson J."/>
            <person name="Simpson A.J.G."/>
            <person name="Bulyk M.L."/>
            <person name="Harlow E."/>
            <person name="Marsischky G."/>
            <person name="Kolodner R.D."/>
            <person name="LaBaer J."/>
        </authorList>
    </citation>
    <scope>NUCLEOTIDE SEQUENCE [GENOMIC DNA]</scope>
    <source>
        <strain>ATCC 204508 / S288c</strain>
    </source>
</reference>
<reference key="5">
    <citation type="journal article" date="1997" name="J. Biol. Chem.">
        <title>The yeast SPC22/23 homolog Spc3p is essential for signal peptidase activity.</title>
        <authorList>
            <person name="Meyer H.A."/>
            <person name="Hartmann E."/>
        </authorList>
    </citation>
    <scope>IDENTIFICATION IN THE SIGNAL PEPTIDASE COMPLEX</scope>
</reference>
<reference key="6">
    <citation type="journal article" date="2000" name="J. Biol. Chem.">
        <title>Interactions between Spc2p and other components of the endoplasmic reticulum translocation sites of the yeast Saccharomyces cerevisiae.</title>
        <authorList>
            <person name="Antonin W."/>
            <person name="Meyer H.A."/>
            <person name="Hartmann E."/>
        </authorList>
    </citation>
    <scope>INTERACTION WITH SBH1 AND SEB2</scope>
</reference>
<reference key="7">
    <citation type="journal article" date="2003" name="Nature">
        <title>Global analysis of protein expression in yeast.</title>
        <authorList>
            <person name="Ghaemmaghami S."/>
            <person name="Huh W.-K."/>
            <person name="Bower K."/>
            <person name="Howson R.W."/>
            <person name="Belle A."/>
            <person name="Dephoure N."/>
            <person name="O'Shea E.K."/>
            <person name="Weissman J.S."/>
        </authorList>
    </citation>
    <scope>LEVEL OF PROTEIN EXPRESSION [LARGE SCALE ANALYSIS]</scope>
</reference>
<reference key="8">
    <citation type="journal article" date="2012" name="Proc. Natl. Acad. Sci. U.S.A.">
        <title>N-terminal acetylome analyses and functional insights of the N-terminal acetyltransferase NatB.</title>
        <authorList>
            <person name="Van Damme P."/>
            <person name="Lasa M."/>
            <person name="Polevoda B."/>
            <person name="Gazquez C."/>
            <person name="Elosegui-Artola A."/>
            <person name="Kim D.S."/>
            <person name="De Juan-Pardo E."/>
            <person name="Demeyer K."/>
            <person name="Hole K."/>
            <person name="Larrea E."/>
            <person name="Timmerman E."/>
            <person name="Prieto J."/>
            <person name="Arnesen T."/>
            <person name="Sherman F."/>
            <person name="Gevaert K."/>
            <person name="Aldabe R."/>
        </authorList>
    </citation>
    <scope>ACETYLATION [LARGE SCALE ANALYSIS] AT SER-2</scope>
    <scope>CLEAVAGE OF INITIATOR METHIONINE [LARGE SCALE ANALYSIS]</scope>
    <scope>IDENTIFICATION BY MASS SPECTROMETRY [LARGE SCALE ANALYSIS]</scope>
</reference>
<name>SPC1_YEAST</name>
<organism>
    <name type="scientific">Saccharomyces cerevisiae (strain ATCC 204508 / S288c)</name>
    <name type="common">Baker's yeast</name>
    <dbReference type="NCBI Taxonomy" id="559292"/>
    <lineage>
        <taxon>Eukaryota</taxon>
        <taxon>Fungi</taxon>
        <taxon>Dikarya</taxon>
        <taxon>Ascomycota</taxon>
        <taxon>Saccharomycotina</taxon>
        <taxon>Saccharomycetes</taxon>
        <taxon>Saccharomycetales</taxon>
        <taxon>Saccharomycetaceae</taxon>
        <taxon>Saccharomyces</taxon>
    </lineage>
</organism>
<accession>P46965</accession>
<accession>D6VWI6</accession>
<feature type="initiator methionine" description="Removed" evidence="8">
    <location>
        <position position="1"/>
    </location>
</feature>
<feature type="chain" id="PRO_0000215162" description="Signal peptidase complex subunit 1">
    <location>
        <begin position="2"/>
        <end position="94"/>
    </location>
</feature>
<feature type="topological domain" description="Cytoplasmic" evidence="2">
    <location>
        <begin position="2"/>
        <end position="28"/>
    </location>
</feature>
<feature type="transmembrane region" description="Helical" evidence="2">
    <location>
        <begin position="29"/>
        <end position="49"/>
    </location>
</feature>
<feature type="topological domain" description="Lumenal" evidence="2">
    <location>
        <position position="50"/>
    </location>
</feature>
<feature type="transmembrane region" description="Helical" evidence="2">
    <location>
        <begin position="51"/>
        <end position="71"/>
    </location>
</feature>
<feature type="topological domain" description="Cytoplasmic" evidence="2">
    <location>
        <begin position="72"/>
        <end position="94"/>
    </location>
</feature>
<feature type="modified residue" description="N-acetylserine" evidence="8">
    <location>
        <position position="2"/>
    </location>
</feature>
<dbReference type="EMBL" id="U26257">
    <property type="protein sequence ID" value="AAC49366.1"/>
    <property type="molecule type" value="Genomic_DNA"/>
</dbReference>
<dbReference type="EMBL" id="Z49510">
    <property type="protein sequence ID" value="CAA89533.1"/>
    <property type="molecule type" value="Genomic_DNA"/>
</dbReference>
<dbReference type="EMBL" id="Z49511">
    <property type="protein sequence ID" value="CAA89535.1"/>
    <property type="molecule type" value="Genomic_DNA"/>
</dbReference>
<dbReference type="EMBL" id="AY557861">
    <property type="protein sequence ID" value="AAS56187.1"/>
    <property type="molecule type" value="Genomic_DNA"/>
</dbReference>
<dbReference type="EMBL" id="BK006943">
    <property type="protein sequence ID" value="DAA08802.1"/>
    <property type="molecule type" value="Genomic_DNA"/>
</dbReference>
<dbReference type="PIR" id="S61934">
    <property type="entry name" value="S61934"/>
</dbReference>
<dbReference type="RefSeq" id="NP_012544.1">
    <property type="nucleotide sequence ID" value="NM_001181667.1"/>
</dbReference>
<dbReference type="SMR" id="P46965"/>
<dbReference type="BioGRID" id="33767">
    <property type="interactions" value="141"/>
</dbReference>
<dbReference type="ComplexPortal" id="CPX-1835">
    <property type="entry name" value="Signal peptidase complex"/>
</dbReference>
<dbReference type="DIP" id="DIP-2770N"/>
<dbReference type="FunCoup" id="P46965">
    <property type="interactions" value="198"/>
</dbReference>
<dbReference type="IntAct" id="P46965">
    <property type="interactions" value="18"/>
</dbReference>
<dbReference type="MINT" id="P46965"/>
<dbReference type="STRING" id="4932.YJR010C-A"/>
<dbReference type="MEROPS" id="X43.001"/>
<dbReference type="iPTMnet" id="P46965"/>
<dbReference type="PaxDb" id="4932-YJR010C-A"/>
<dbReference type="PeptideAtlas" id="P46965"/>
<dbReference type="EnsemblFungi" id="YJR010C-A_mRNA">
    <property type="protein sequence ID" value="YJR010C-A"/>
    <property type="gene ID" value="YJR010C-A"/>
</dbReference>
<dbReference type="GeneID" id="853467"/>
<dbReference type="KEGG" id="sce:YJR010C-A"/>
<dbReference type="AGR" id="SGD:S000003770"/>
<dbReference type="SGD" id="S000003770">
    <property type="gene designation" value="SPC1"/>
</dbReference>
<dbReference type="VEuPathDB" id="FungiDB:YJR010C-A"/>
<dbReference type="eggNOG" id="KOG4112">
    <property type="taxonomic scope" value="Eukaryota"/>
</dbReference>
<dbReference type="HOGENOM" id="CLU_134505_2_0_1"/>
<dbReference type="InParanoid" id="P46965"/>
<dbReference type="OMA" id="KLQWVQP"/>
<dbReference type="OrthoDB" id="263893at2759"/>
<dbReference type="BioCyc" id="YEAST:G3O-31655-MONOMER"/>
<dbReference type="BioGRID-ORCS" id="853467">
    <property type="hits" value="0 hits in 10 CRISPR screens"/>
</dbReference>
<dbReference type="PRO" id="PR:P46965"/>
<dbReference type="Proteomes" id="UP000002311">
    <property type="component" value="Chromosome X"/>
</dbReference>
<dbReference type="RNAct" id="P46965">
    <property type="molecule type" value="protein"/>
</dbReference>
<dbReference type="GO" id="GO:0005783">
    <property type="term" value="C:endoplasmic reticulum"/>
    <property type="evidence" value="ECO:0007005"/>
    <property type="project" value="SGD"/>
</dbReference>
<dbReference type="GO" id="GO:0005789">
    <property type="term" value="C:endoplasmic reticulum membrane"/>
    <property type="evidence" value="ECO:0000303"/>
    <property type="project" value="ComplexPortal"/>
</dbReference>
<dbReference type="GO" id="GO:0005787">
    <property type="term" value="C:signal peptidase complex"/>
    <property type="evidence" value="ECO:0000314"/>
    <property type="project" value="SGD"/>
</dbReference>
<dbReference type="GO" id="GO:0045047">
    <property type="term" value="P:protein targeting to ER"/>
    <property type="evidence" value="ECO:0000316"/>
    <property type="project" value="SGD"/>
</dbReference>
<dbReference type="GO" id="GO:0006465">
    <property type="term" value="P:signal peptide processing"/>
    <property type="evidence" value="ECO:0000315"/>
    <property type="project" value="SGD"/>
</dbReference>
<dbReference type="InterPro" id="IPR009542">
    <property type="entry name" value="Spc1/SPCS1"/>
</dbReference>
<dbReference type="PANTHER" id="PTHR13202">
    <property type="entry name" value="MICROSOMAL SIGNAL PEPTIDASE 12 KDA SUBUNIT"/>
    <property type="match status" value="1"/>
</dbReference>
<dbReference type="PANTHER" id="PTHR13202:SF0">
    <property type="entry name" value="SIGNAL PEPTIDASE COMPLEX SUBUNIT 1"/>
    <property type="match status" value="1"/>
</dbReference>
<dbReference type="Pfam" id="PF06645">
    <property type="entry name" value="SPC12"/>
    <property type="match status" value="1"/>
</dbReference>